<proteinExistence type="inferred from homology"/>
<reference key="1">
    <citation type="journal article" date="2011" name="MBio">
        <title>Novel metabolic attributes of the genus Cyanothece, comprising a group of unicellular nitrogen-fixing Cyanobacteria.</title>
        <authorList>
            <person name="Bandyopadhyay A."/>
            <person name="Elvitigala T."/>
            <person name="Welsh E."/>
            <person name="Stockel J."/>
            <person name="Liberton M."/>
            <person name="Min H."/>
            <person name="Sherman L.A."/>
            <person name="Pakrasi H.B."/>
        </authorList>
    </citation>
    <scope>NUCLEOTIDE SEQUENCE [LARGE SCALE GENOMIC DNA]</scope>
    <source>
        <strain>PCC 7425 / ATCC 29141</strain>
    </source>
</reference>
<name>APT_CYAP4</name>
<gene>
    <name evidence="1" type="primary">apt</name>
    <name type="ordered locus">Cyan7425_1819</name>
</gene>
<accession>B8HS80</accession>
<evidence type="ECO:0000255" key="1">
    <source>
        <dbReference type="HAMAP-Rule" id="MF_00004"/>
    </source>
</evidence>
<keyword id="KW-0963">Cytoplasm</keyword>
<keyword id="KW-0328">Glycosyltransferase</keyword>
<keyword id="KW-0660">Purine salvage</keyword>
<keyword id="KW-0808">Transferase</keyword>
<organism>
    <name type="scientific">Cyanothece sp. (strain PCC 7425 / ATCC 29141)</name>
    <dbReference type="NCBI Taxonomy" id="395961"/>
    <lineage>
        <taxon>Bacteria</taxon>
        <taxon>Bacillati</taxon>
        <taxon>Cyanobacteriota</taxon>
        <taxon>Cyanophyceae</taxon>
        <taxon>Gomontiellales</taxon>
        <taxon>Cyanothecaceae</taxon>
        <taxon>Cyanothece</taxon>
    </lineage>
</organism>
<dbReference type="EC" id="2.4.2.7" evidence="1"/>
<dbReference type="EMBL" id="CP001344">
    <property type="protein sequence ID" value="ACL44186.1"/>
    <property type="molecule type" value="Genomic_DNA"/>
</dbReference>
<dbReference type="SMR" id="B8HS80"/>
<dbReference type="STRING" id="395961.Cyan7425_1819"/>
<dbReference type="KEGG" id="cyn:Cyan7425_1819"/>
<dbReference type="eggNOG" id="COG0503">
    <property type="taxonomic scope" value="Bacteria"/>
</dbReference>
<dbReference type="HOGENOM" id="CLU_063339_3_0_3"/>
<dbReference type="OrthoDB" id="9803963at2"/>
<dbReference type="UniPathway" id="UPA00588">
    <property type="reaction ID" value="UER00646"/>
</dbReference>
<dbReference type="GO" id="GO:0005737">
    <property type="term" value="C:cytoplasm"/>
    <property type="evidence" value="ECO:0007669"/>
    <property type="project" value="UniProtKB-SubCell"/>
</dbReference>
<dbReference type="GO" id="GO:0002055">
    <property type="term" value="F:adenine binding"/>
    <property type="evidence" value="ECO:0007669"/>
    <property type="project" value="TreeGrafter"/>
</dbReference>
<dbReference type="GO" id="GO:0003999">
    <property type="term" value="F:adenine phosphoribosyltransferase activity"/>
    <property type="evidence" value="ECO:0007669"/>
    <property type="project" value="UniProtKB-UniRule"/>
</dbReference>
<dbReference type="GO" id="GO:0016208">
    <property type="term" value="F:AMP binding"/>
    <property type="evidence" value="ECO:0007669"/>
    <property type="project" value="TreeGrafter"/>
</dbReference>
<dbReference type="GO" id="GO:0006168">
    <property type="term" value="P:adenine salvage"/>
    <property type="evidence" value="ECO:0007669"/>
    <property type="project" value="InterPro"/>
</dbReference>
<dbReference type="GO" id="GO:0044209">
    <property type="term" value="P:AMP salvage"/>
    <property type="evidence" value="ECO:0007669"/>
    <property type="project" value="UniProtKB-UniRule"/>
</dbReference>
<dbReference type="GO" id="GO:0006166">
    <property type="term" value="P:purine ribonucleoside salvage"/>
    <property type="evidence" value="ECO:0007669"/>
    <property type="project" value="UniProtKB-KW"/>
</dbReference>
<dbReference type="CDD" id="cd06223">
    <property type="entry name" value="PRTases_typeI"/>
    <property type="match status" value="1"/>
</dbReference>
<dbReference type="FunFam" id="3.40.50.2020:FF:000021">
    <property type="entry name" value="Adenine phosphoribosyltransferase"/>
    <property type="match status" value="1"/>
</dbReference>
<dbReference type="Gene3D" id="3.40.50.2020">
    <property type="match status" value="1"/>
</dbReference>
<dbReference type="HAMAP" id="MF_00004">
    <property type="entry name" value="Aden_phosphoribosyltr"/>
    <property type="match status" value="1"/>
</dbReference>
<dbReference type="InterPro" id="IPR005764">
    <property type="entry name" value="Ade_phspho_trans"/>
</dbReference>
<dbReference type="InterPro" id="IPR000836">
    <property type="entry name" value="PRibTrfase_dom"/>
</dbReference>
<dbReference type="InterPro" id="IPR029057">
    <property type="entry name" value="PRTase-like"/>
</dbReference>
<dbReference type="InterPro" id="IPR050054">
    <property type="entry name" value="UPRTase/APRTase"/>
</dbReference>
<dbReference type="NCBIfam" id="TIGR01090">
    <property type="entry name" value="apt"/>
    <property type="match status" value="1"/>
</dbReference>
<dbReference type="NCBIfam" id="NF002634">
    <property type="entry name" value="PRK02304.1-3"/>
    <property type="match status" value="1"/>
</dbReference>
<dbReference type="NCBIfam" id="NF002636">
    <property type="entry name" value="PRK02304.1-5"/>
    <property type="match status" value="1"/>
</dbReference>
<dbReference type="PANTHER" id="PTHR32315">
    <property type="entry name" value="ADENINE PHOSPHORIBOSYLTRANSFERASE"/>
    <property type="match status" value="1"/>
</dbReference>
<dbReference type="PANTHER" id="PTHR32315:SF3">
    <property type="entry name" value="ADENINE PHOSPHORIBOSYLTRANSFERASE"/>
    <property type="match status" value="1"/>
</dbReference>
<dbReference type="Pfam" id="PF00156">
    <property type="entry name" value="Pribosyltran"/>
    <property type="match status" value="1"/>
</dbReference>
<dbReference type="SUPFAM" id="SSF53271">
    <property type="entry name" value="PRTase-like"/>
    <property type="match status" value="1"/>
</dbReference>
<dbReference type="PROSITE" id="PS00103">
    <property type="entry name" value="PUR_PYR_PR_TRANSFER"/>
    <property type="match status" value="1"/>
</dbReference>
<protein>
    <recommendedName>
        <fullName evidence="1">Adenine phosphoribosyltransferase</fullName>
        <shortName evidence="1">APRT</shortName>
        <ecNumber evidence="1">2.4.2.7</ecNumber>
    </recommendedName>
</protein>
<comment type="function">
    <text evidence="1">Catalyzes a salvage reaction resulting in the formation of AMP, that is energically less costly than de novo synthesis.</text>
</comment>
<comment type="catalytic activity">
    <reaction evidence="1">
        <text>AMP + diphosphate = 5-phospho-alpha-D-ribose 1-diphosphate + adenine</text>
        <dbReference type="Rhea" id="RHEA:16609"/>
        <dbReference type="ChEBI" id="CHEBI:16708"/>
        <dbReference type="ChEBI" id="CHEBI:33019"/>
        <dbReference type="ChEBI" id="CHEBI:58017"/>
        <dbReference type="ChEBI" id="CHEBI:456215"/>
        <dbReference type="EC" id="2.4.2.7"/>
    </reaction>
</comment>
<comment type="pathway">
    <text evidence="1">Purine metabolism; AMP biosynthesis via salvage pathway; AMP from adenine: step 1/1.</text>
</comment>
<comment type="subunit">
    <text evidence="1">Homodimer.</text>
</comment>
<comment type="subcellular location">
    <subcellularLocation>
        <location evidence="1">Cytoplasm</location>
    </subcellularLocation>
</comment>
<comment type="similarity">
    <text evidence="1">Belongs to the purine/pyrimidine phosphoribosyltransferase family.</text>
</comment>
<sequence>MDLKSLIREVPDFPKPGILFRDITTLLQNEQGLRYTIDRLTQAFSDQAIDYVAGIESRGFIFGAPLAYKLGAGFVPIRKAGKLCAEVHTVEYALEYGTDRLEIHKDAIHTGGRVLIVDDLIATGGTAAAAAQLITLCGGDLVSYAFIIELQDLGGRKNLPDVPIKVLVEY</sequence>
<feature type="chain" id="PRO_1000116237" description="Adenine phosphoribosyltransferase">
    <location>
        <begin position="1"/>
        <end position="170"/>
    </location>
</feature>